<organism>
    <name type="scientific">Escherichia coli O6:K15:H31 (strain 536 / UPEC)</name>
    <dbReference type="NCBI Taxonomy" id="362663"/>
    <lineage>
        <taxon>Bacteria</taxon>
        <taxon>Pseudomonadati</taxon>
        <taxon>Pseudomonadota</taxon>
        <taxon>Gammaproteobacteria</taxon>
        <taxon>Enterobacterales</taxon>
        <taxon>Enterobacteriaceae</taxon>
        <taxon>Escherichia</taxon>
    </lineage>
</organism>
<evidence type="ECO:0000255" key="1">
    <source>
        <dbReference type="HAMAP-Rule" id="MF_00362"/>
    </source>
</evidence>
<evidence type="ECO:0000305" key="2"/>
<proteinExistence type="inferred from homology"/>
<keyword id="KW-0007">Acetylation</keyword>
<keyword id="KW-0687">Ribonucleoprotein</keyword>
<keyword id="KW-0689">Ribosomal protein</keyword>
<keyword id="KW-0694">RNA-binding</keyword>
<keyword id="KW-0699">rRNA-binding</keyword>
<name>RL10_ECOL5</name>
<accession>Q0TA80</accession>
<sequence length="165" mass="17712">MALNLQDKQAIVAEVSEVAKGALSAVVADSRGVTVDKMTELRKAGREAGVYMRVVRNTLLRRAVEGTPFECLKDAFVGPTLIAYSMEHPGAAARLFKEFAKANAKFEVKAAAFEGELIPASQIDRLATLPTYEEAIARLMATMKEASAGKLVRTLAAVRDAKEAA</sequence>
<protein>
    <recommendedName>
        <fullName evidence="1">Large ribosomal subunit protein uL10</fullName>
    </recommendedName>
    <alternativeName>
        <fullName evidence="2">50S ribosomal protein L10</fullName>
    </alternativeName>
</protein>
<comment type="function">
    <text evidence="1">Forms part of the ribosomal stalk, playing a central role in the interaction of the ribosome with GTP-bound translation factors.</text>
</comment>
<comment type="subunit">
    <text evidence="1">Part of the ribosomal stalk of the 50S ribosomal subunit. The N-terminus interacts with L11 and the large rRNA to form the base of the stalk. The C-terminus forms an elongated spine to which L12 dimers bind in a sequential fashion forming a multimeric L10(L12)X complex.</text>
</comment>
<comment type="similarity">
    <text evidence="1">Belongs to the universal ribosomal protein uL10 family.</text>
</comment>
<reference key="1">
    <citation type="journal article" date="2006" name="Mol. Microbiol.">
        <title>Role of pathogenicity island-associated integrases in the genome plasticity of uropathogenic Escherichia coli strain 536.</title>
        <authorList>
            <person name="Hochhut B."/>
            <person name="Wilde C."/>
            <person name="Balling G."/>
            <person name="Middendorf B."/>
            <person name="Dobrindt U."/>
            <person name="Brzuszkiewicz E."/>
            <person name="Gottschalk G."/>
            <person name="Carniel E."/>
            <person name="Hacker J."/>
        </authorList>
    </citation>
    <scope>NUCLEOTIDE SEQUENCE [LARGE SCALE GENOMIC DNA]</scope>
    <source>
        <strain>536 / UPEC</strain>
    </source>
</reference>
<gene>
    <name evidence="1" type="primary">rplJ</name>
    <name type="ordered locus">ECP_4198</name>
</gene>
<feature type="chain" id="PRO_1000005493" description="Large ribosomal subunit protein uL10">
    <location>
        <begin position="1"/>
        <end position="165"/>
    </location>
</feature>
<feature type="modified residue" description="N6-acetyllysine" evidence="1">
    <location>
        <position position="37"/>
    </location>
</feature>
<feature type="modified residue" description="N6-acetyllysine" evidence="1">
    <location>
        <position position="105"/>
    </location>
</feature>
<dbReference type="EMBL" id="CP000247">
    <property type="protein sequence ID" value="ABG72149.1"/>
    <property type="molecule type" value="Genomic_DNA"/>
</dbReference>
<dbReference type="RefSeq" id="WP_001207201.1">
    <property type="nucleotide sequence ID" value="NC_008253.1"/>
</dbReference>
<dbReference type="SMR" id="Q0TA80"/>
<dbReference type="GeneID" id="93777909"/>
<dbReference type="KEGG" id="ecp:ECP_4198"/>
<dbReference type="HOGENOM" id="CLU_092227_0_2_6"/>
<dbReference type="Proteomes" id="UP000009182">
    <property type="component" value="Chromosome"/>
</dbReference>
<dbReference type="GO" id="GO:0015934">
    <property type="term" value="C:large ribosomal subunit"/>
    <property type="evidence" value="ECO:0007669"/>
    <property type="project" value="InterPro"/>
</dbReference>
<dbReference type="GO" id="GO:0070180">
    <property type="term" value="F:large ribosomal subunit rRNA binding"/>
    <property type="evidence" value="ECO:0007669"/>
    <property type="project" value="UniProtKB-UniRule"/>
</dbReference>
<dbReference type="GO" id="GO:0003735">
    <property type="term" value="F:structural constituent of ribosome"/>
    <property type="evidence" value="ECO:0007669"/>
    <property type="project" value="InterPro"/>
</dbReference>
<dbReference type="GO" id="GO:0006412">
    <property type="term" value="P:translation"/>
    <property type="evidence" value="ECO:0007669"/>
    <property type="project" value="UniProtKB-UniRule"/>
</dbReference>
<dbReference type="CDD" id="cd05797">
    <property type="entry name" value="Ribosomal_L10"/>
    <property type="match status" value="1"/>
</dbReference>
<dbReference type="FunFam" id="3.30.70.1730:FF:000001">
    <property type="entry name" value="50S ribosomal protein L10"/>
    <property type="match status" value="1"/>
</dbReference>
<dbReference type="Gene3D" id="3.30.70.1730">
    <property type="match status" value="1"/>
</dbReference>
<dbReference type="Gene3D" id="6.10.250.2350">
    <property type="match status" value="1"/>
</dbReference>
<dbReference type="HAMAP" id="MF_00362">
    <property type="entry name" value="Ribosomal_uL10"/>
    <property type="match status" value="1"/>
</dbReference>
<dbReference type="InterPro" id="IPR001790">
    <property type="entry name" value="Ribosomal_uL10"/>
</dbReference>
<dbReference type="InterPro" id="IPR043141">
    <property type="entry name" value="Ribosomal_uL10-like_sf"/>
</dbReference>
<dbReference type="InterPro" id="IPR022973">
    <property type="entry name" value="Ribosomal_uL10_bac"/>
</dbReference>
<dbReference type="InterPro" id="IPR047865">
    <property type="entry name" value="Ribosomal_uL10_bac_type"/>
</dbReference>
<dbReference type="InterPro" id="IPR002363">
    <property type="entry name" value="Ribosomal_uL10_CS_bac"/>
</dbReference>
<dbReference type="NCBIfam" id="NF000955">
    <property type="entry name" value="PRK00099.1-1"/>
    <property type="match status" value="1"/>
</dbReference>
<dbReference type="PANTHER" id="PTHR11560">
    <property type="entry name" value="39S RIBOSOMAL PROTEIN L10, MITOCHONDRIAL"/>
    <property type="match status" value="1"/>
</dbReference>
<dbReference type="Pfam" id="PF00466">
    <property type="entry name" value="Ribosomal_L10"/>
    <property type="match status" value="1"/>
</dbReference>
<dbReference type="SUPFAM" id="SSF160369">
    <property type="entry name" value="Ribosomal protein L10-like"/>
    <property type="match status" value="1"/>
</dbReference>
<dbReference type="PROSITE" id="PS01109">
    <property type="entry name" value="RIBOSOMAL_L10"/>
    <property type="match status" value="1"/>
</dbReference>